<organism>
    <name type="scientific">Ehrlichia canis (strain Jake)</name>
    <dbReference type="NCBI Taxonomy" id="269484"/>
    <lineage>
        <taxon>Bacteria</taxon>
        <taxon>Pseudomonadati</taxon>
        <taxon>Pseudomonadota</taxon>
        <taxon>Alphaproteobacteria</taxon>
        <taxon>Rickettsiales</taxon>
        <taxon>Anaplasmataceae</taxon>
        <taxon>Ehrlichia</taxon>
    </lineage>
</organism>
<feature type="chain" id="PRO_0000362289" description="ATP synthase subunit a">
    <location>
        <begin position="1"/>
        <end position="243"/>
    </location>
</feature>
<feature type="transmembrane region" description="Helical" evidence="1">
    <location>
        <begin position="29"/>
        <end position="49"/>
    </location>
</feature>
<feature type="transmembrane region" description="Helical" evidence="1">
    <location>
        <begin position="54"/>
        <end position="74"/>
    </location>
</feature>
<feature type="transmembrane region" description="Helical" evidence="1">
    <location>
        <begin position="89"/>
        <end position="109"/>
    </location>
</feature>
<feature type="transmembrane region" description="Helical" evidence="1">
    <location>
        <begin position="114"/>
        <end position="134"/>
    </location>
</feature>
<feature type="transmembrane region" description="Helical" evidence="1">
    <location>
        <begin position="144"/>
        <end position="164"/>
    </location>
</feature>
<feature type="transmembrane region" description="Helical" evidence="1">
    <location>
        <begin position="182"/>
        <end position="202"/>
    </location>
</feature>
<feature type="transmembrane region" description="Helical" evidence="1">
    <location>
        <begin position="208"/>
        <end position="228"/>
    </location>
</feature>
<protein>
    <recommendedName>
        <fullName evidence="1">ATP synthase subunit a</fullName>
    </recommendedName>
    <alternativeName>
        <fullName evidence="1">ATP synthase F0 sector subunit a</fullName>
    </alternativeName>
    <alternativeName>
        <fullName evidence="1">F-ATPase subunit 6</fullName>
    </alternativeName>
</protein>
<name>ATP6_EHRCJ</name>
<evidence type="ECO:0000255" key="1">
    <source>
        <dbReference type="HAMAP-Rule" id="MF_01393"/>
    </source>
</evidence>
<proteinExistence type="inferred from homology"/>
<accession>Q3YQV2</accession>
<gene>
    <name evidence="1" type="primary">atpB</name>
    <name type="ordered locus">Ecaj_0872</name>
</gene>
<keyword id="KW-0066">ATP synthesis</keyword>
<keyword id="KW-0997">Cell inner membrane</keyword>
<keyword id="KW-1003">Cell membrane</keyword>
<keyword id="KW-0138">CF(0)</keyword>
<keyword id="KW-0375">Hydrogen ion transport</keyword>
<keyword id="KW-0406">Ion transport</keyword>
<keyword id="KW-0472">Membrane</keyword>
<keyword id="KW-0812">Transmembrane</keyword>
<keyword id="KW-1133">Transmembrane helix</keyword>
<keyword id="KW-0813">Transport</keyword>
<sequence>MSASPLDQFKILTIFKLPNIAGYNIDFTNASLFMVLSTISVALFCYIGLKKESIIPNGIQSIVEFIYEFIVSTIESNVGKEGLQYIPLVFTIFMFIATCNLLGILPLGFTATSHIAVTFAISMVVFVSVTIIGFKHQGIHFLRILLPQGTPGWLAPMMVFIELFAYCARPVSLSIRLAANMIAGHTIIKVIAGFVVKMNIFLTPLPMIFIIILIGFEIFVAILQAYIFTVLTCVYLSDAVKEH</sequence>
<comment type="function">
    <text evidence="1">Key component of the proton channel; it plays a direct role in the translocation of protons across the membrane.</text>
</comment>
<comment type="subunit">
    <text evidence="1">F-type ATPases have 2 components, CF(1) - the catalytic core - and CF(0) - the membrane proton channel. CF(1) has five subunits: alpha(3), beta(3), gamma(1), delta(1), epsilon(1). CF(0) has three main subunits: a(1), b(2) and c(9-12). The alpha and beta chains form an alternating ring which encloses part of the gamma chain. CF(1) is attached to CF(0) by a central stalk formed by the gamma and epsilon chains, while a peripheral stalk is formed by the delta and b chains.</text>
</comment>
<comment type="subcellular location">
    <subcellularLocation>
        <location evidence="1">Cell inner membrane</location>
        <topology evidence="1">Multi-pass membrane protein</topology>
    </subcellularLocation>
</comment>
<comment type="similarity">
    <text evidence="1">Belongs to the ATPase A chain family.</text>
</comment>
<reference key="1">
    <citation type="journal article" date="2006" name="J. Bacteriol.">
        <title>The genome of the obligately intracellular bacterium Ehrlichia canis reveals themes of complex membrane structure and immune evasion strategies.</title>
        <authorList>
            <person name="Mavromatis K."/>
            <person name="Doyle C.K."/>
            <person name="Lykidis A."/>
            <person name="Ivanova N."/>
            <person name="Francino M.P."/>
            <person name="Chain P."/>
            <person name="Shin M."/>
            <person name="Malfatti S."/>
            <person name="Larimer F."/>
            <person name="Copeland A."/>
            <person name="Detter J.C."/>
            <person name="Land M."/>
            <person name="Richardson P.M."/>
            <person name="Yu X.J."/>
            <person name="Walker D.H."/>
            <person name="McBride J.W."/>
            <person name="Kyrpides N.C."/>
        </authorList>
    </citation>
    <scope>NUCLEOTIDE SEQUENCE [LARGE SCALE GENOMIC DNA]</scope>
    <source>
        <strain>Jake</strain>
    </source>
</reference>
<dbReference type="EMBL" id="CP000107">
    <property type="protein sequence ID" value="AAZ68903.1"/>
    <property type="molecule type" value="Genomic_DNA"/>
</dbReference>
<dbReference type="RefSeq" id="WP_011304980.1">
    <property type="nucleotide sequence ID" value="NC_007354.1"/>
</dbReference>
<dbReference type="SMR" id="Q3YQV2"/>
<dbReference type="FunCoup" id="Q3YQV2">
    <property type="interactions" value="209"/>
</dbReference>
<dbReference type="STRING" id="269484.Ecaj_0872"/>
<dbReference type="KEGG" id="ecn:Ecaj_0872"/>
<dbReference type="eggNOG" id="COG0356">
    <property type="taxonomic scope" value="Bacteria"/>
</dbReference>
<dbReference type="HOGENOM" id="CLU_041018_0_2_5"/>
<dbReference type="InParanoid" id="Q3YQV2"/>
<dbReference type="Proteomes" id="UP000000435">
    <property type="component" value="Chromosome"/>
</dbReference>
<dbReference type="GO" id="GO:0005886">
    <property type="term" value="C:plasma membrane"/>
    <property type="evidence" value="ECO:0007669"/>
    <property type="project" value="UniProtKB-SubCell"/>
</dbReference>
<dbReference type="GO" id="GO:0045259">
    <property type="term" value="C:proton-transporting ATP synthase complex"/>
    <property type="evidence" value="ECO:0007669"/>
    <property type="project" value="UniProtKB-KW"/>
</dbReference>
<dbReference type="GO" id="GO:0046933">
    <property type="term" value="F:proton-transporting ATP synthase activity, rotational mechanism"/>
    <property type="evidence" value="ECO:0007669"/>
    <property type="project" value="UniProtKB-UniRule"/>
</dbReference>
<dbReference type="CDD" id="cd00310">
    <property type="entry name" value="ATP-synt_Fo_a_6"/>
    <property type="match status" value="1"/>
</dbReference>
<dbReference type="Gene3D" id="1.20.120.220">
    <property type="entry name" value="ATP synthase, F0 complex, subunit A"/>
    <property type="match status" value="1"/>
</dbReference>
<dbReference type="HAMAP" id="MF_01393">
    <property type="entry name" value="ATP_synth_a_bact"/>
    <property type="match status" value="1"/>
</dbReference>
<dbReference type="InterPro" id="IPR000568">
    <property type="entry name" value="ATP_synth_F0_asu"/>
</dbReference>
<dbReference type="InterPro" id="IPR023011">
    <property type="entry name" value="ATP_synth_F0_asu_AS"/>
</dbReference>
<dbReference type="InterPro" id="IPR045083">
    <property type="entry name" value="ATP_synth_F0_asu_bact/mt"/>
</dbReference>
<dbReference type="InterPro" id="IPR035908">
    <property type="entry name" value="F0_ATP_A_sf"/>
</dbReference>
<dbReference type="NCBIfam" id="TIGR01131">
    <property type="entry name" value="ATP_synt_6_or_A"/>
    <property type="match status" value="1"/>
</dbReference>
<dbReference type="NCBIfam" id="NF004482">
    <property type="entry name" value="PRK05815.2-4"/>
    <property type="match status" value="1"/>
</dbReference>
<dbReference type="PANTHER" id="PTHR11410">
    <property type="entry name" value="ATP SYNTHASE SUBUNIT A"/>
    <property type="match status" value="1"/>
</dbReference>
<dbReference type="PANTHER" id="PTHR11410:SF0">
    <property type="entry name" value="ATP SYNTHASE SUBUNIT A"/>
    <property type="match status" value="1"/>
</dbReference>
<dbReference type="Pfam" id="PF00119">
    <property type="entry name" value="ATP-synt_A"/>
    <property type="match status" value="1"/>
</dbReference>
<dbReference type="PRINTS" id="PR00123">
    <property type="entry name" value="ATPASEA"/>
</dbReference>
<dbReference type="SUPFAM" id="SSF81336">
    <property type="entry name" value="F1F0 ATP synthase subunit A"/>
    <property type="match status" value="1"/>
</dbReference>
<dbReference type="PROSITE" id="PS00449">
    <property type="entry name" value="ATPASE_A"/>
    <property type="match status" value="1"/>
</dbReference>